<comment type="function">
    <text evidence="1">May protect the nitrogenase Fe-Mo protein from oxidative damage.</text>
</comment>
<comment type="subunit">
    <text evidence="1">Homotrimer; associates with NifD.</text>
</comment>
<comment type="similarity">
    <text evidence="3">Belongs to the NifW family.</text>
</comment>
<proteinExistence type="inferred from homology"/>
<protein>
    <recommendedName>
        <fullName>Nitrogenase-stabilizing/protective protein NifW</fullName>
    </recommendedName>
</protein>
<keyword id="KW-0535">Nitrogen fixation</keyword>
<gene>
    <name type="primary">nifW</name>
</gene>
<dbReference type="EMBL" id="AF119361">
    <property type="protein sequence ID" value="AAD17267.1"/>
    <property type="molecule type" value="Genomic_DNA"/>
</dbReference>
<dbReference type="SMR" id="Q9Z5Y0"/>
<dbReference type="GO" id="GO:0009399">
    <property type="term" value="P:nitrogen fixation"/>
    <property type="evidence" value="ECO:0007669"/>
    <property type="project" value="UniProtKB-UniRule"/>
</dbReference>
<dbReference type="HAMAP" id="MF_00529">
    <property type="entry name" value="NifW"/>
    <property type="match status" value="1"/>
</dbReference>
<dbReference type="InterPro" id="IPR004893">
    <property type="entry name" value="NifW"/>
</dbReference>
<dbReference type="Pfam" id="PF03206">
    <property type="entry name" value="NifW"/>
    <property type="match status" value="1"/>
</dbReference>
<dbReference type="PIRSF" id="PIRSF005790">
    <property type="entry name" value="NifW"/>
    <property type="match status" value="1"/>
</dbReference>
<accession>Q9Z5Y0</accession>
<feature type="chain" id="PRO_0000219532" description="Nitrogenase-stabilizing/protective protein NifW">
    <location>
        <begin position="1"/>
        <end position="126"/>
    </location>
</feature>
<feature type="region of interest" description="Disordered" evidence="2">
    <location>
        <begin position="104"/>
        <end position="126"/>
    </location>
</feature>
<evidence type="ECO:0000250" key="1"/>
<evidence type="ECO:0000256" key="2">
    <source>
        <dbReference type="SAM" id="MobiDB-lite"/>
    </source>
</evidence>
<evidence type="ECO:0000305" key="3"/>
<organism>
    <name type="scientific">Frankia sp. (strain EuIK1)</name>
    <dbReference type="NCBI Taxonomy" id="47227"/>
    <lineage>
        <taxon>Bacteria</taxon>
        <taxon>Bacillati</taxon>
        <taxon>Actinomycetota</taxon>
        <taxon>Actinomycetes</taxon>
        <taxon>Frankiales</taxon>
        <taxon>Frankiaceae</taxon>
        <taxon>Frankia</taxon>
    </lineage>
</organism>
<reference key="1">
    <citation type="submission" date="1999-01" db="EMBL/GenBank/DDBJ databases">
        <title>Nif-gene organization and nucleotide sequences from Frankia EuIK1 strain.</title>
        <authorList>
            <person name="Chung-Sun A."/>
            <person name="Ji-Tae K."/>
            <person name="Won-Jin K."/>
            <person name="Won-Young Y."/>
        </authorList>
    </citation>
    <scope>NUCLEOTIDE SEQUENCE [GENOMIC DNA]</scope>
</reference>
<sequence length="126" mass="14287">MSALTRQLEEFRRCSTAEQYFELLDVDYDPRVVAVNRLHILRYFAEEIAGLHEGADAEVSPEVLLRDYRAALIRAYEAFTTATGLDHRLFKVLKDRAPEPAGFVATTDITVERPATAQSDEKGQDR</sequence>
<name>NIFW_FRASE</name>